<comment type="catalytic activity">
    <reaction evidence="1">
        <text>tRNA(Leu) + L-leucine + ATP = L-leucyl-tRNA(Leu) + AMP + diphosphate</text>
        <dbReference type="Rhea" id="RHEA:11688"/>
        <dbReference type="Rhea" id="RHEA-COMP:9613"/>
        <dbReference type="Rhea" id="RHEA-COMP:9622"/>
        <dbReference type="ChEBI" id="CHEBI:30616"/>
        <dbReference type="ChEBI" id="CHEBI:33019"/>
        <dbReference type="ChEBI" id="CHEBI:57427"/>
        <dbReference type="ChEBI" id="CHEBI:78442"/>
        <dbReference type="ChEBI" id="CHEBI:78494"/>
        <dbReference type="ChEBI" id="CHEBI:456215"/>
        <dbReference type="EC" id="6.1.1.4"/>
    </reaction>
</comment>
<comment type="subcellular location">
    <subcellularLocation>
        <location evidence="1">Cytoplasm</location>
    </subcellularLocation>
</comment>
<comment type="similarity">
    <text evidence="1">Belongs to the class-I aminoacyl-tRNA synthetase family.</text>
</comment>
<keyword id="KW-0030">Aminoacyl-tRNA synthetase</keyword>
<keyword id="KW-0067">ATP-binding</keyword>
<keyword id="KW-0963">Cytoplasm</keyword>
<keyword id="KW-0436">Ligase</keyword>
<keyword id="KW-0547">Nucleotide-binding</keyword>
<keyword id="KW-0648">Protein biosynthesis</keyword>
<dbReference type="EC" id="6.1.1.4" evidence="1"/>
<dbReference type="EMBL" id="CP000688">
    <property type="protein sequence ID" value="ABQ16750.1"/>
    <property type="molecule type" value="Genomic_DNA"/>
</dbReference>
<dbReference type="SMR" id="A5FP73"/>
<dbReference type="KEGG" id="deb:DehaBAV1_0159"/>
<dbReference type="PATRIC" id="fig|216389.18.peg.179"/>
<dbReference type="HOGENOM" id="CLU_004427_0_0_0"/>
<dbReference type="GO" id="GO:0005829">
    <property type="term" value="C:cytosol"/>
    <property type="evidence" value="ECO:0007669"/>
    <property type="project" value="TreeGrafter"/>
</dbReference>
<dbReference type="GO" id="GO:0002161">
    <property type="term" value="F:aminoacyl-tRNA deacylase activity"/>
    <property type="evidence" value="ECO:0007669"/>
    <property type="project" value="InterPro"/>
</dbReference>
<dbReference type="GO" id="GO:0005524">
    <property type="term" value="F:ATP binding"/>
    <property type="evidence" value="ECO:0007669"/>
    <property type="project" value="UniProtKB-UniRule"/>
</dbReference>
<dbReference type="GO" id="GO:0004823">
    <property type="term" value="F:leucine-tRNA ligase activity"/>
    <property type="evidence" value="ECO:0007669"/>
    <property type="project" value="UniProtKB-UniRule"/>
</dbReference>
<dbReference type="GO" id="GO:0006429">
    <property type="term" value="P:leucyl-tRNA aminoacylation"/>
    <property type="evidence" value="ECO:0007669"/>
    <property type="project" value="UniProtKB-UniRule"/>
</dbReference>
<dbReference type="CDD" id="cd07958">
    <property type="entry name" value="Anticodon_Ia_Leu_BEm"/>
    <property type="match status" value="1"/>
</dbReference>
<dbReference type="CDD" id="cd00812">
    <property type="entry name" value="LeuRS_core"/>
    <property type="match status" value="1"/>
</dbReference>
<dbReference type="FunFam" id="3.40.50.620:FF:000003">
    <property type="entry name" value="Leucine--tRNA ligase"/>
    <property type="match status" value="1"/>
</dbReference>
<dbReference type="FunFam" id="3.40.50.620:FF:000056">
    <property type="entry name" value="Leucine--tRNA ligase"/>
    <property type="match status" value="1"/>
</dbReference>
<dbReference type="FunFam" id="1.10.730.10:FF:000011">
    <property type="entry name" value="Leucine--tRNA ligase chloroplastic/mitochondrial"/>
    <property type="match status" value="1"/>
</dbReference>
<dbReference type="Gene3D" id="3.10.20.590">
    <property type="match status" value="1"/>
</dbReference>
<dbReference type="Gene3D" id="3.40.50.620">
    <property type="entry name" value="HUPs"/>
    <property type="match status" value="2"/>
</dbReference>
<dbReference type="Gene3D" id="1.10.730.10">
    <property type="entry name" value="Isoleucyl-tRNA Synthetase, Domain 1"/>
    <property type="match status" value="1"/>
</dbReference>
<dbReference type="HAMAP" id="MF_00049_B">
    <property type="entry name" value="Leu_tRNA_synth_B"/>
    <property type="match status" value="1"/>
</dbReference>
<dbReference type="InterPro" id="IPR002300">
    <property type="entry name" value="aa-tRNA-synth_Ia"/>
</dbReference>
<dbReference type="InterPro" id="IPR002302">
    <property type="entry name" value="Leu-tRNA-ligase"/>
</dbReference>
<dbReference type="InterPro" id="IPR025709">
    <property type="entry name" value="Leu_tRNA-synth_edit"/>
</dbReference>
<dbReference type="InterPro" id="IPR013155">
    <property type="entry name" value="M/V/L/I-tRNA-synth_anticd-bd"/>
</dbReference>
<dbReference type="InterPro" id="IPR015413">
    <property type="entry name" value="Methionyl/Leucyl_tRNA_Synth"/>
</dbReference>
<dbReference type="InterPro" id="IPR014729">
    <property type="entry name" value="Rossmann-like_a/b/a_fold"/>
</dbReference>
<dbReference type="InterPro" id="IPR009080">
    <property type="entry name" value="tRNAsynth_Ia_anticodon-bd"/>
</dbReference>
<dbReference type="InterPro" id="IPR009008">
    <property type="entry name" value="Val/Leu/Ile-tRNA-synth_edit"/>
</dbReference>
<dbReference type="NCBIfam" id="TIGR00396">
    <property type="entry name" value="leuS_bact"/>
    <property type="match status" value="1"/>
</dbReference>
<dbReference type="PANTHER" id="PTHR43740:SF2">
    <property type="entry name" value="LEUCINE--TRNA LIGASE, MITOCHONDRIAL"/>
    <property type="match status" value="1"/>
</dbReference>
<dbReference type="PANTHER" id="PTHR43740">
    <property type="entry name" value="LEUCYL-TRNA SYNTHETASE"/>
    <property type="match status" value="1"/>
</dbReference>
<dbReference type="Pfam" id="PF08264">
    <property type="entry name" value="Anticodon_1"/>
    <property type="match status" value="1"/>
</dbReference>
<dbReference type="Pfam" id="PF00133">
    <property type="entry name" value="tRNA-synt_1"/>
    <property type="match status" value="1"/>
</dbReference>
<dbReference type="Pfam" id="PF13603">
    <property type="entry name" value="tRNA-synt_1_2"/>
    <property type="match status" value="1"/>
</dbReference>
<dbReference type="Pfam" id="PF09334">
    <property type="entry name" value="tRNA-synt_1g"/>
    <property type="match status" value="1"/>
</dbReference>
<dbReference type="PRINTS" id="PR00985">
    <property type="entry name" value="TRNASYNTHLEU"/>
</dbReference>
<dbReference type="SUPFAM" id="SSF47323">
    <property type="entry name" value="Anticodon-binding domain of a subclass of class I aminoacyl-tRNA synthetases"/>
    <property type="match status" value="1"/>
</dbReference>
<dbReference type="SUPFAM" id="SSF52374">
    <property type="entry name" value="Nucleotidylyl transferase"/>
    <property type="match status" value="1"/>
</dbReference>
<dbReference type="SUPFAM" id="SSF50677">
    <property type="entry name" value="ValRS/IleRS/LeuRS editing domain"/>
    <property type="match status" value="1"/>
</dbReference>
<organism>
    <name type="scientific">Dehalococcoides mccartyi (strain ATCC BAA-2100 / JCM 16839 / KCTC 5957 / BAV1)</name>
    <dbReference type="NCBI Taxonomy" id="216389"/>
    <lineage>
        <taxon>Bacteria</taxon>
        <taxon>Bacillati</taxon>
        <taxon>Chloroflexota</taxon>
        <taxon>Dehalococcoidia</taxon>
        <taxon>Dehalococcoidales</taxon>
        <taxon>Dehalococcoidaceae</taxon>
        <taxon>Dehalococcoides</taxon>
    </lineage>
</organism>
<sequence length="813" mass="92816">MAEKYNPQETEKKWQDKWAADRLYHASEDSPKPKWYSLTMFPYTSGNLHIGHWYAEVPADCFARYKRLRGFNVMRPVGFDSFGLPAENAAIKHNIHPRIWTLNNVENMRRQLKTIGAMFDWDREVITCLPEYYKWTQWFFLKLYEAGLAYRAKAPVNWCPSCQAVLANEQVVDGTCWRCETPTTRRDLEQWFFRITNYADELKDHEGLDWPEKITAMQRNWVGKSYGAEVSFALDCPTAFEKEIKVFTTRPDTIYGVTFMVLAPEHPLVEKITTPENKAAVDAYIKKSRTCTEIERLSTEREKDGVFTGTYVTNRVNGQKVPVWIGDYVLQSYGTGAVMGVPAHDERDFVFAQKYHLPVITVIAPSAYDGKPLEAAYINEGVMLNSGPFNGTPNTEGKEKVCDYLAEHGWGKKTVNYKLRDWLISRQRYWGAPIPMVYCEKCGIVPVPEKDLPVLLPEDVGFRSGGESPLKYNEGFVNTICPVCGGKAKRETDTMDTFMCSSWYFLRYTSPGYDKGPFDPVKLKYWMPVDLYTGGAEHAVMHLFYSRFFTKALRDMGIIDFGEPFKKLFNQGIIVSNHQKMSKSKGNVVTPDNLVAEVGTDAVRAYLMFVGPWDQGGEWNDSGLSGMSRWLNRVWNLFTEEYTPQTASAEAERELKRTLHQTIKKITMDIERLRFNTVVAALMELSNSLAKLKETAAISAENWQNTLQTFALMLAPVAPHIAEELWANLGMKYSIHNQNWPTWDEELAKDEVITLIIQVNGKLRERLEMPAGISEAEAKETALNSERVKPHLLGKTPVTVIYVPGKLVNIVVK</sequence>
<feature type="chain" id="PRO_1000199193" description="Leucine--tRNA ligase">
    <location>
        <begin position="1"/>
        <end position="813"/>
    </location>
</feature>
<feature type="short sequence motif" description="'HIGH' region">
    <location>
        <begin position="42"/>
        <end position="52"/>
    </location>
</feature>
<feature type="short sequence motif" description="'KMSKS' region">
    <location>
        <begin position="580"/>
        <end position="584"/>
    </location>
</feature>
<feature type="binding site" evidence="1">
    <location>
        <position position="583"/>
    </location>
    <ligand>
        <name>ATP</name>
        <dbReference type="ChEBI" id="CHEBI:30616"/>
    </ligand>
</feature>
<gene>
    <name evidence="1" type="primary">leuS</name>
    <name type="ordered locus">DehaBAV1_0159</name>
</gene>
<name>SYL_DEHMB</name>
<evidence type="ECO:0000255" key="1">
    <source>
        <dbReference type="HAMAP-Rule" id="MF_00049"/>
    </source>
</evidence>
<accession>A5FP73</accession>
<protein>
    <recommendedName>
        <fullName evidence="1">Leucine--tRNA ligase</fullName>
        <ecNumber evidence="1">6.1.1.4</ecNumber>
    </recommendedName>
    <alternativeName>
        <fullName evidence="1">Leucyl-tRNA synthetase</fullName>
        <shortName evidence="1">LeuRS</shortName>
    </alternativeName>
</protein>
<proteinExistence type="inferred from homology"/>
<reference key="1">
    <citation type="submission" date="2007-05" db="EMBL/GenBank/DDBJ databases">
        <title>Complete sequence of Dehalococcoides sp. BAV1.</title>
        <authorList>
            <consortium name="US DOE Joint Genome Institute"/>
            <person name="Copeland A."/>
            <person name="Lucas S."/>
            <person name="Lapidus A."/>
            <person name="Barry K."/>
            <person name="Detter J.C."/>
            <person name="Glavina del Rio T."/>
            <person name="Hammon N."/>
            <person name="Israni S."/>
            <person name="Pitluck S."/>
            <person name="Lowry S."/>
            <person name="Clum A."/>
            <person name="Schmutz J."/>
            <person name="Larimer F."/>
            <person name="Land M."/>
            <person name="Hauser L."/>
            <person name="Kyrpides N."/>
            <person name="Kim E."/>
            <person name="Ritalahti K.M."/>
            <person name="Loeffler F."/>
            <person name="Richardson P."/>
        </authorList>
    </citation>
    <scope>NUCLEOTIDE SEQUENCE [LARGE SCALE GENOMIC DNA]</scope>
    <source>
        <strain>ATCC BAA-2100 / JCM 16839 / KCTC 5957 / BAV1</strain>
    </source>
</reference>